<protein>
    <recommendedName>
        <fullName evidence="1">Photosystem II reaction center protein M</fullName>
        <shortName evidence="1">PSII-M</shortName>
    </recommendedName>
</protein>
<comment type="function">
    <text evidence="1">One of the components of the core complex of photosystem II (PSII). PSII is a light-driven water:plastoquinone oxidoreductase that uses light energy to abstract electrons from H(2)O, generating O(2) and a proton gradient subsequently used for ATP formation. It consists of a core antenna complex that captures photons, and an electron transfer chain that converts photonic excitation into a charge separation. This subunit is found at the monomer-monomer interface.</text>
</comment>
<comment type="subunit">
    <text evidence="1">PSII is composed of 1 copy each of membrane proteins PsbA, PsbB, PsbC, PsbD, PsbE, PsbF, PsbH, PsbI, PsbJ, PsbK, PsbL, PsbM, PsbT, PsbX, PsbY, PsbZ, Psb30/Ycf12, at least 3 peripheral proteins of the oxygen-evolving complex and a large number of cofactors. It forms dimeric complexes.</text>
</comment>
<comment type="subcellular location">
    <subcellularLocation>
        <location evidence="1">Plastid</location>
        <location evidence="1">Chloroplast thylakoid membrane</location>
        <topology evidence="1">Single-pass membrane protein</topology>
    </subcellularLocation>
</comment>
<comment type="similarity">
    <text evidence="1">Belongs to the PsbM family.</text>
</comment>
<name>PSBM_COFAR</name>
<gene>
    <name evidence="1" type="primary">psbM</name>
</gene>
<feature type="chain" id="PRO_0000276234" description="Photosystem II reaction center protein M">
    <location>
        <begin position="1"/>
        <end position="34"/>
    </location>
</feature>
<feature type="transmembrane region" description="Helical" evidence="1">
    <location>
        <begin position="5"/>
        <end position="25"/>
    </location>
</feature>
<evidence type="ECO:0000255" key="1">
    <source>
        <dbReference type="HAMAP-Rule" id="MF_00438"/>
    </source>
</evidence>
<reference key="1">
    <citation type="journal article" date="2007" name="Plant Biotechnol. J.">
        <title>The complete nucleotide sequence of the coffee (Coffea arabica L.) chloroplast genome: organization and implications for biotechnology and phylogenetic relationships amongst angiosperms.</title>
        <authorList>
            <person name="Samson N."/>
            <person name="Bausher M.G."/>
            <person name="Lee S.-B."/>
            <person name="Jansen R.K."/>
            <person name="Daniell H."/>
        </authorList>
    </citation>
    <scope>NUCLEOTIDE SEQUENCE [LARGE SCALE GENOMIC DNA]</scope>
</reference>
<dbReference type="EMBL" id="EF044213">
    <property type="protein sequence ID" value="ABJ89673.1"/>
    <property type="molecule type" value="Genomic_DNA"/>
</dbReference>
<dbReference type="RefSeq" id="YP_817476.1">
    <property type="nucleotide sequence ID" value="NC_008535.1"/>
</dbReference>
<dbReference type="SMR" id="A0A329"/>
<dbReference type="GeneID" id="4421796"/>
<dbReference type="OrthoDB" id="564131at2759"/>
<dbReference type="Proteomes" id="UP000515148">
    <property type="component" value="Chloroplast Pltd"/>
</dbReference>
<dbReference type="GO" id="GO:0009535">
    <property type="term" value="C:chloroplast thylakoid membrane"/>
    <property type="evidence" value="ECO:0007669"/>
    <property type="project" value="UniProtKB-SubCell"/>
</dbReference>
<dbReference type="GO" id="GO:0009523">
    <property type="term" value="C:photosystem II"/>
    <property type="evidence" value="ECO:0007669"/>
    <property type="project" value="UniProtKB-KW"/>
</dbReference>
<dbReference type="GO" id="GO:0019684">
    <property type="term" value="P:photosynthesis, light reaction"/>
    <property type="evidence" value="ECO:0007669"/>
    <property type="project" value="InterPro"/>
</dbReference>
<dbReference type="HAMAP" id="MF_00438">
    <property type="entry name" value="PSII_PsbM"/>
    <property type="match status" value="1"/>
</dbReference>
<dbReference type="InterPro" id="IPR007826">
    <property type="entry name" value="PSII_PsbM"/>
</dbReference>
<dbReference type="InterPro" id="IPR037269">
    <property type="entry name" value="PSII_PsbM_sf"/>
</dbReference>
<dbReference type="NCBIfam" id="TIGR03038">
    <property type="entry name" value="PS_II_psbM"/>
    <property type="match status" value="1"/>
</dbReference>
<dbReference type="PANTHER" id="PTHR35774">
    <property type="entry name" value="PHOTOSYSTEM II REACTION CENTER PROTEIN M"/>
    <property type="match status" value="1"/>
</dbReference>
<dbReference type="PANTHER" id="PTHR35774:SF1">
    <property type="entry name" value="PHOTOSYSTEM II REACTION CENTER PROTEIN M"/>
    <property type="match status" value="1"/>
</dbReference>
<dbReference type="Pfam" id="PF05151">
    <property type="entry name" value="PsbM"/>
    <property type="match status" value="1"/>
</dbReference>
<dbReference type="SUPFAM" id="SSF161033">
    <property type="entry name" value="Photosystem II reaction center protein M, PsbM"/>
    <property type="match status" value="1"/>
</dbReference>
<geneLocation type="chloroplast"/>
<proteinExistence type="inferred from homology"/>
<sequence>MEVNILAFIATALFILVPTAFLLIIYVKTVSQNN</sequence>
<accession>A0A329</accession>
<organism>
    <name type="scientific">Coffea arabica</name>
    <name type="common">Arabian coffee</name>
    <dbReference type="NCBI Taxonomy" id="13443"/>
    <lineage>
        <taxon>Eukaryota</taxon>
        <taxon>Viridiplantae</taxon>
        <taxon>Streptophyta</taxon>
        <taxon>Embryophyta</taxon>
        <taxon>Tracheophyta</taxon>
        <taxon>Spermatophyta</taxon>
        <taxon>Magnoliopsida</taxon>
        <taxon>eudicotyledons</taxon>
        <taxon>Gunneridae</taxon>
        <taxon>Pentapetalae</taxon>
        <taxon>asterids</taxon>
        <taxon>lamiids</taxon>
        <taxon>Gentianales</taxon>
        <taxon>Rubiaceae</taxon>
        <taxon>Ixoroideae</taxon>
        <taxon>Gardenieae complex</taxon>
        <taxon>Bertiereae - Coffeeae clade</taxon>
        <taxon>Coffeeae</taxon>
        <taxon>Coffea</taxon>
    </lineage>
</organism>
<keyword id="KW-0150">Chloroplast</keyword>
<keyword id="KW-0472">Membrane</keyword>
<keyword id="KW-0602">Photosynthesis</keyword>
<keyword id="KW-0604">Photosystem II</keyword>
<keyword id="KW-0934">Plastid</keyword>
<keyword id="KW-0674">Reaction center</keyword>
<keyword id="KW-1185">Reference proteome</keyword>
<keyword id="KW-0793">Thylakoid</keyword>
<keyword id="KW-0812">Transmembrane</keyword>
<keyword id="KW-1133">Transmembrane helix</keyword>